<sequence length="2293" mass="269091">MKRHQFKSWIFELREILREIKNSHYFLDSWTKFDSVGSFTHIFFHQERFIKLFDPRIWSILLSRDSQGSTSNRYFTIKGVVLLVVAVLLYRINNRNMVERKNLYLMGLLPIPMNSIGPRNDTLEESFGSSNINRLIVSLLYLPKGKKISESCFMDPKESTWVLPITKKCIMPESNWGSRWWRNRIGKKRDSSCKISNETVARIEVSFKEKDIKYLEFLFVSYTDDPIRKDHDWELFDRLSPRKKRNIINLNSGQLFEILVKHWICYLMSAFREKRPIEVEGFFKQQGAESTIQSNDIEHVSHLFSRNKWGISLQNCAQFHMWQFRQDLFVSWGKNPHESDFLRNVSRENWIWLDNVWLVNKDRFFSKVRNVSSNIQYDSTRSIFVQVTDSSQLKGSSDQSRDRFDSISNSNEDLEYHTLINQREIQQLKERSILWDPSFLQTERTEIESERFPKCLSGYSSMSRLFTEREKQMNNHLLPEEIEEFLGNPTRSIRSFFSDRWSELHLGSNPTERSTRDQKLLKKQQDVSFVPSRRSENKEMVDIFKIITYLQNTVSIHPISSDPGCDMVPKDEPDMDSSNKISFLNKNQFFDLFHLFHDRNRGGYTLHHDFESEERFQEMVDLFTLSITEPDLVYHKGFAFSIDSYGLDQKKFLNEVFNSRDESKKKSLLVLPPIFYEENESFYRRIRKKSVRISCGNDLEDPKPKRVVFASNNIMEAVNQDRLIRNLIQIQYSTYRYIRNVSNRFFLMNRSDRNFEYGIQRDQIGTDTLNHRTIMKYTINQHLSNLKKSQKKWFDPLISRTERSMNRDPDAYRYKWSNGSKNFQEHLEHFVSEQKSRFQVVFDRLRINQYSIDWSEVIDKQDLSKSLRFFLSKSLLFLSKSLLFLSKSLPFFFVSFGNIPIHRSEIHIYELKGPNDQLCNQLLESIGVQIVHLNKLKPFLLADHDTSQKSKFLINGGTISPFLFNKISKWMIDSFHTRNNRRKSFDNTDSYFSMISHDRDNWLNPVKPFHRSSLISSFYKANRLRFLNNPHHFWFYCNKRFPFYVEKARINNYDLTYGQFLNILFIRNKIFSLCVGKKKHAFLERDTISPIESQVSNIFIPNDFPQSGDETYNLYKSFHFPIRSDPFVRRAIYSIADISGTPLTEGQIVNFERTYCQPLSDMNLSDSEGKNLDQYLNFNSNMGLIHTLCSEKSLPSEKRKKRSLCLKKCVEKRQMYRTFQRDSAFSNLSKWNLFQTYMPWFLTSTGCKYLNFTLLDTFSDLLPILSSSQKFVSIFHDIMHGSDISWPIPQKKWCLPQWNLISEISSKCLHNLLLSEEMIHRNNESPVPLIWTHLRSPNAREFLYSILFLLLVAGYLVRTHLLFVSRASSELHTEFEKIKSLMIPSYMIELRKLLDRYPTSELNSFWLKNLFLVALQQLGDSLEEIRGSASGGNMLLGGGPAYGVKSIRSKKKYLNINLIDIIDLISIIPNPINRITFSRNTRHLSRTSKEIYSLIRKRKNVNGDWIDDKIESWVANSDSIDDEEREFLVQFSTLTTEKRMDQILLSLTHSDNLSKNDSGYQMIEQPGSIYLRYLVDIHKKYLMNYEFNRSCLAERRIFLAHYQTITYSQTSCGANSFYFPSHGKPFSLRLALSPSRGILVIGSIGTGRSYLVKYLATNSYVPFITVFPNKFLDDKPKGYLIDDIDIDDSDDIDDSDDIDDDLDTELLTMMNALTMDMTPKIDRFDITLQFELAKAMSPCIIWIPNIHDLYVNESNYLSLGLLVNYLSRDCERCSTRNILVIASTHIPQKVDPALIAPNKSNTCIKIRRLLIPQQRKHFFTLSYTRGFHLEKKIFHTNGFGSITMGSNARDLVALTNEALSISITQKKSIIDTNTIRSALHRQTWDLRSQVRSVQDHGILFYQIGRAVAQNVLLSNCPIDPISIYMKKKSCKEGDSYLYKWYFELGTSMKKLTILLYLLSCSAGSVAQDLWSLPGPDEKNGITSYGFVENDSDLVHGLLEVEGVLVGSSRTEKDCSQFDNDRVTLLLRSEPRNPLDMMQNGSCSIVDQRFLYEKYESEFEEGEGALDPQQIEEDLFNHIVWAPRIWRPCGNLFDCIERPNELGFPYWARSFRGKRIIYHKEDELQENDSEFLQSGTMQYQTRDRSSKEQGFFRISQFIWDPGGPFFFLFKDQPFVSVFSRREFFADEEMSKGLLTSQTNPPTSIYKRWFIKNTQEKHFELLIHRQRWLRTNSSLSNGSFRSNTPSESYQYLSNLFLSNGTLLDQMTKTLLRKRWLFPDEMKHLIHVTGERFPIP</sequence>
<proteinExistence type="inferred from homology"/>
<protein>
    <recommendedName>
        <fullName evidence="1">Protein Ycf2</fullName>
    </recommendedName>
</protein>
<gene>
    <name evidence="1" type="primary">ycf2-A</name>
</gene>
<gene>
    <name evidence="1" type="primary">ycf2-B</name>
</gene>
<feature type="chain" id="PRO_0000343789" description="Protein Ycf2">
    <location>
        <begin position="1"/>
        <end position="2293"/>
    </location>
</feature>
<feature type="binding site" evidence="1">
    <location>
        <begin position="1642"/>
        <end position="1649"/>
    </location>
    <ligand>
        <name>ATP</name>
        <dbReference type="ChEBI" id="CHEBI:30616"/>
    </ligand>
</feature>
<evidence type="ECO:0000255" key="1">
    <source>
        <dbReference type="HAMAP-Rule" id="MF_01330"/>
    </source>
</evidence>
<comment type="function">
    <text evidence="1">Probable ATPase of unknown function. Its presence in a non-photosynthetic plant (Epifagus virginiana) and experiments in tobacco indicate that it has an essential function which is probably not related to photosynthesis.</text>
</comment>
<comment type="subcellular location">
    <subcellularLocation>
        <location evidence="1">Plastid</location>
        <location evidence="1">Chloroplast stroma</location>
    </subcellularLocation>
</comment>
<comment type="similarity">
    <text evidence="1">Belongs to the Ycf2 family.</text>
</comment>
<name>YCF2_PLAOC</name>
<keyword id="KW-0067">ATP-binding</keyword>
<keyword id="KW-0150">Chloroplast</keyword>
<keyword id="KW-0547">Nucleotide-binding</keyword>
<keyword id="KW-0934">Plastid</keyword>
<geneLocation type="chloroplast"/>
<reference key="1">
    <citation type="journal article" date="2006" name="BMC Plant Biol.">
        <title>Rapid and accurate pyrosequencing of angiosperm plastid genomes.</title>
        <authorList>
            <person name="Moore M.J."/>
            <person name="Dhingra A."/>
            <person name="Soltis P.S."/>
            <person name="Shaw R."/>
            <person name="Farmerie W.G."/>
            <person name="Folta K.M."/>
            <person name="Soltis D.E."/>
        </authorList>
    </citation>
    <scope>NUCLEOTIDE SEQUENCE [LARGE SCALE GENOMIC DNA]</scope>
</reference>
<accession>Q09FY5</accession>
<organism>
    <name type="scientific">Platanus occidentalis</name>
    <name type="common">Sycamore</name>
    <name type="synonym">American plane tree</name>
    <dbReference type="NCBI Taxonomy" id="4403"/>
    <lineage>
        <taxon>Eukaryota</taxon>
        <taxon>Viridiplantae</taxon>
        <taxon>Streptophyta</taxon>
        <taxon>Embryophyta</taxon>
        <taxon>Tracheophyta</taxon>
        <taxon>Spermatophyta</taxon>
        <taxon>Magnoliopsida</taxon>
        <taxon>Proteales</taxon>
        <taxon>Platanaceae</taxon>
        <taxon>Platanus</taxon>
    </lineage>
</organism>
<dbReference type="EMBL" id="DQ923116">
    <property type="protein sequence ID" value="ABI49823.1"/>
    <property type="molecule type" value="Genomic_DNA"/>
</dbReference>
<dbReference type="EMBL" id="DQ923116">
    <property type="protein sequence ID" value="ABI49840.1"/>
    <property type="molecule type" value="Genomic_DNA"/>
</dbReference>
<dbReference type="GO" id="GO:0009570">
    <property type="term" value="C:chloroplast stroma"/>
    <property type="evidence" value="ECO:0007669"/>
    <property type="project" value="UniProtKB-SubCell"/>
</dbReference>
<dbReference type="GO" id="GO:0005524">
    <property type="term" value="F:ATP binding"/>
    <property type="evidence" value="ECO:0007669"/>
    <property type="project" value="UniProtKB-KW"/>
</dbReference>
<dbReference type="GO" id="GO:0016887">
    <property type="term" value="F:ATP hydrolysis activity"/>
    <property type="evidence" value="ECO:0007669"/>
    <property type="project" value="InterPro"/>
</dbReference>
<dbReference type="CDD" id="cd19505">
    <property type="entry name" value="RecA-like_Ycf2"/>
    <property type="match status" value="1"/>
</dbReference>
<dbReference type="Gene3D" id="3.40.50.300">
    <property type="entry name" value="P-loop containing nucleotide triphosphate hydrolases"/>
    <property type="match status" value="1"/>
</dbReference>
<dbReference type="HAMAP" id="MF_01330">
    <property type="entry name" value="Ycf2"/>
    <property type="match status" value="1"/>
</dbReference>
<dbReference type="InterPro" id="IPR003593">
    <property type="entry name" value="AAA+_ATPase"/>
</dbReference>
<dbReference type="InterPro" id="IPR003959">
    <property type="entry name" value="ATPase_AAA_core"/>
</dbReference>
<dbReference type="InterPro" id="IPR027417">
    <property type="entry name" value="P-loop_NTPase"/>
</dbReference>
<dbReference type="InterPro" id="IPR008543">
    <property type="entry name" value="Uncharacterised_Ycf2"/>
</dbReference>
<dbReference type="InterPro" id="IPR056777">
    <property type="entry name" value="Ycf2_N"/>
</dbReference>
<dbReference type="PANTHER" id="PTHR33078:SF51">
    <property type="entry name" value="PROTEIN TIC 214"/>
    <property type="match status" value="1"/>
</dbReference>
<dbReference type="PANTHER" id="PTHR33078">
    <property type="entry name" value="PROTEIN YCF2-RELATED"/>
    <property type="match status" value="1"/>
</dbReference>
<dbReference type="Pfam" id="PF00004">
    <property type="entry name" value="AAA"/>
    <property type="match status" value="1"/>
</dbReference>
<dbReference type="Pfam" id="PF05695">
    <property type="entry name" value="Ycf2"/>
    <property type="match status" value="1"/>
</dbReference>
<dbReference type="SMART" id="SM00382">
    <property type="entry name" value="AAA"/>
    <property type="match status" value="1"/>
</dbReference>
<dbReference type="SUPFAM" id="SSF52540">
    <property type="entry name" value="P-loop containing nucleoside triphosphate hydrolases"/>
    <property type="match status" value="1"/>
</dbReference>